<organism>
    <name type="scientific">Pseudomonas aeruginosa (strain UCBPP-PA14)</name>
    <dbReference type="NCBI Taxonomy" id="208963"/>
    <lineage>
        <taxon>Bacteria</taxon>
        <taxon>Pseudomonadati</taxon>
        <taxon>Pseudomonadota</taxon>
        <taxon>Gammaproteobacteria</taxon>
        <taxon>Pseudomonadales</taxon>
        <taxon>Pseudomonadaceae</taxon>
        <taxon>Pseudomonas</taxon>
    </lineage>
</organism>
<gene>
    <name evidence="1" type="primary">gatA</name>
    <name type="ordered locus">PA14_58180</name>
</gene>
<name>GATA_PSEAB</name>
<feature type="chain" id="PRO_1000015886" description="Glutamyl-tRNA(Gln) amidotransferase subunit A">
    <location>
        <begin position="1"/>
        <end position="484"/>
    </location>
</feature>
<feature type="active site" description="Charge relay system" evidence="1">
    <location>
        <position position="77"/>
    </location>
</feature>
<feature type="active site" description="Charge relay system" evidence="1">
    <location>
        <position position="152"/>
    </location>
</feature>
<feature type="active site" description="Acyl-ester intermediate" evidence="1">
    <location>
        <position position="176"/>
    </location>
</feature>
<sequence length="484" mass="51819">MLHQLTLAEIARALADKQFSAEELTRTLLGRIRQLDPQLNSFISITDDLAIAQAKAADERRANGENGALLGAPIAHKDLFCTQGVRTSCGSKMLDNFVSPYDATVVEKLAAAGAVTLGKLNMDEFAMGSSNQSSHYGAVNNPWSLDRVPGGSSGGSAAAVAARLLPAATGTDTGGSIRQPAALTNLTGIKPTYGRVSRWGMIAYASSLDQGGPLARTAEDCALMLGVMAGFDPKDSTSVEQPVDDYLAALQKPLSGLRIGLPREYFGAGLDSRIADAVLAVVEELKTLGATVKDISLPNMQHAIPAYYVIAPAEASSNLSRFDGVRYGYRCDAPQNLEDLYKRSRAEGFGSEVKNRIMVGTYALSAGYYDAYYLQAQKIRRLIKNDFVSAFAEVDVILGPTTPNPAWKIGEKNDDPVSQYLEDIYTITANLAGLPGLSMPAGFVDGLPVGVQLLAPYFQEGRLLNVAHQYQQVSDWHTRTPAGF</sequence>
<dbReference type="EC" id="6.3.5.7" evidence="1"/>
<dbReference type="EMBL" id="CP000438">
    <property type="protein sequence ID" value="ABJ13751.1"/>
    <property type="molecule type" value="Genomic_DNA"/>
</dbReference>
<dbReference type="RefSeq" id="WP_003094399.1">
    <property type="nucleotide sequence ID" value="NZ_CP034244.1"/>
</dbReference>
<dbReference type="SMR" id="Q02GV8"/>
<dbReference type="KEGG" id="pau:PA14_58180"/>
<dbReference type="PseudoCAP" id="PA14_58180"/>
<dbReference type="HOGENOM" id="CLU_009600_0_3_6"/>
<dbReference type="BioCyc" id="PAER208963:G1G74-4901-MONOMER"/>
<dbReference type="Proteomes" id="UP000000653">
    <property type="component" value="Chromosome"/>
</dbReference>
<dbReference type="GO" id="GO:0030956">
    <property type="term" value="C:glutamyl-tRNA(Gln) amidotransferase complex"/>
    <property type="evidence" value="ECO:0007669"/>
    <property type="project" value="InterPro"/>
</dbReference>
<dbReference type="GO" id="GO:0005524">
    <property type="term" value="F:ATP binding"/>
    <property type="evidence" value="ECO:0007669"/>
    <property type="project" value="UniProtKB-KW"/>
</dbReference>
<dbReference type="GO" id="GO:0050567">
    <property type="term" value="F:glutaminyl-tRNA synthase (glutamine-hydrolyzing) activity"/>
    <property type="evidence" value="ECO:0007669"/>
    <property type="project" value="UniProtKB-UniRule"/>
</dbReference>
<dbReference type="GO" id="GO:0006412">
    <property type="term" value="P:translation"/>
    <property type="evidence" value="ECO:0007669"/>
    <property type="project" value="UniProtKB-UniRule"/>
</dbReference>
<dbReference type="Gene3D" id="3.90.1300.10">
    <property type="entry name" value="Amidase signature (AS) domain"/>
    <property type="match status" value="1"/>
</dbReference>
<dbReference type="HAMAP" id="MF_00120">
    <property type="entry name" value="GatA"/>
    <property type="match status" value="1"/>
</dbReference>
<dbReference type="InterPro" id="IPR000120">
    <property type="entry name" value="Amidase"/>
</dbReference>
<dbReference type="InterPro" id="IPR020556">
    <property type="entry name" value="Amidase_CS"/>
</dbReference>
<dbReference type="InterPro" id="IPR023631">
    <property type="entry name" value="Amidase_dom"/>
</dbReference>
<dbReference type="InterPro" id="IPR036928">
    <property type="entry name" value="AS_sf"/>
</dbReference>
<dbReference type="InterPro" id="IPR004412">
    <property type="entry name" value="GatA"/>
</dbReference>
<dbReference type="NCBIfam" id="TIGR00132">
    <property type="entry name" value="gatA"/>
    <property type="match status" value="1"/>
</dbReference>
<dbReference type="PANTHER" id="PTHR11895:SF151">
    <property type="entry name" value="GLUTAMYL-TRNA(GLN) AMIDOTRANSFERASE SUBUNIT A"/>
    <property type="match status" value="1"/>
</dbReference>
<dbReference type="PANTHER" id="PTHR11895">
    <property type="entry name" value="TRANSAMIDASE"/>
    <property type="match status" value="1"/>
</dbReference>
<dbReference type="Pfam" id="PF01425">
    <property type="entry name" value="Amidase"/>
    <property type="match status" value="1"/>
</dbReference>
<dbReference type="SUPFAM" id="SSF75304">
    <property type="entry name" value="Amidase signature (AS) enzymes"/>
    <property type="match status" value="1"/>
</dbReference>
<dbReference type="PROSITE" id="PS00571">
    <property type="entry name" value="AMIDASES"/>
    <property type="match status" value="1"/>
</dbReference>
<accession>Q02GV8</accession>
<comment type="function">
    <text evidence="1">Allows the formation of correctly charged Gln-tRNA(Gln) through the transamidation of misacylated Glu-tRNA(Gln) in organisms which lack glutaminyl-tRNA synthetase. The reaction takes place in the presence of glutamine and ATP through an activated gamma-phospho-Glu-tRNA(Gln).</text>
</comment>
<comment type="catalytic activity">
    <reaction evidence="1">
        <text>L-glutamyl-tRNA(Gln) + L-glutamine + ATP + H2O = L-glutaminyl-tRNA(Gln) + L-glutamate + ADP + phosphate + H(+)</text>
        <dbReference type="Rhea" id="RHEA:17521"/>
        <dbReference type="Rhea" id="RHEA-COMP:9681"/>
        <dbReference type="Rhea" id="RHEA-COMP:9684"/>
        <dbReference type="ChEBI" id="CHEBI:15377"/>
        <dbReference type="ChEBI" id="CHEBI:15378"/>
        <dbReference type="ChEBI" id="CHEBI:29985"/>
        <dbReference type="ChEBI" id="CHEBI:30616"/>
        <dbReference type="ChEBI" id="CHEBI:43474"/>
        <dbReference type="ChEBI" id="CHEBI:58359"/>
        <dbReference type="ChEBI" id="CHEBI:78520"/>
        <dbReference type="ChEBI" id="CHEBI:78521"/>
        <dbReference type="ChEBI" id="CHEBI:456216"/>
        <dbReference type="EC" id="6.3.5.7"/>
    </reaction>
</comment>
<comment type="subunit">
    <text evidence="1">Heterotrimer of A, B and C subunits.</text>
</comment>
<comment type="similarity">
    <text evidence="1">Belongs to the amidase family. GatA subfamily.</text>
</comment>
<keyword id="KW-0067">ATP-binding</keyword>
<keyword id="KW-0436">Ligase</keyword>
<keyword id="KW-0547">Nucleotide-binding</keyword>
<keyword id="KW-0648">Protein biosynthesis</keyword>
<evidence type="ECO:0000255" key="1">
    <source>
        <dbReference type="HAMAP-Rule" id="MF_00120"/>
    </source>
</evidence>
<proteinExistence type="inferred from homology"/>
<protein>
    <recommendedName>
        <fullName evidence="1">Glutamyl-tRNA(Gln) amidotransferase subunit A</fullName>
        <shortName evidence="1">Glu-ADT subunit A</shortName>
        <ecNumber evidence="1">6.3.5.7</ecNumber>
    </recommendedName>
</protein>
<reference key="1">
    <citation type="journal article" date="2006" name="Genome Biol.">
        <title>Genomic analysis reveals that Pseudomonas aeruginosa virulence is combinatorial.</title>
        <authorList>
            <person name="Lee D.G."/>
            <person name="Urbach J.M."/>
            <person name="Wu G."/>
            <person name="Liberati N.T."/>
            <person name="Feinbaum R.L."/>
            <person name="Miyata S."/>
            <person name="Diggins L.T."/>
            <person name="He J."/>
            <person name="Saucier M."/>
            <person name="Deziel E."/>
            <person name="Friedman L."/>
            <person name="Li L."/>
            <person name="Grills G."/>
            <person name="Montgomery K."/>
            <person name="Kucherlapati R."/>
            <person name="Rahme L.G."/>
            <person name="Ausubel F.M."/>
        </authorList>
    </citation>
    <scope>NUCLEOTIDE SEQUENCE [LARGE SCALE GENOMIC DNA]</scope>
    <source>
        <strain>UCBPP-PA14</strain>
    </source>
</reference>